<name>AT53_TOXGO</name>
<proteinExistence type="evidence at protein level"/>
<keyword id="KW-0029">Amino-acid transport</keyword>
<keyword id="KW-1003">Cell membrane</keyword>
<keyword id="KW-0325">Glycoprotein</keyword>
<keyword id="KW-0472">Membrane</keyword>
<keyword id="KW-1185">Reference proteome</keyword>
<keyword id="KW-0812">Transmembrane</keyword>
<keyword id="KW-1133">Transmembrane helix</keyword>
<keyword id="KW-0813">Transport</keyword>
<sequence length="504" mass="54531">MESTEATMVERKAESPSSGDRARSIELAHQPTGAGASLSSFEVGGAKQGVNKAQDSAVNKGAANTPPRVAFGLSRYVVLVAYCLYCLLSGPSFMNWTTIADSLYKSGAFEWECKPGEIDTSVLPHEPKCPEQEVSVNHLFTVASCSYFVFAMLGGIMLDFAGPKFGALTGLACLITGWTLFGFSSESFRAYVPAMVFMGAGIDMAFFPCLCGANLFPGMVATIIAVYGSFRSISFIVGLSLRTIYINVEGATFRGVMLGYVGAGLGFCLLVALFIIPRRAWPAPDEAPSASAEQDVEAGADALAQKGEKNLTAIQSMKRDFLSLSFLPLFPYFVLVLITILFFAPSAKRLIPSAYEANQIISIFSFVPCIILGGIADRLGIVPVMMICNTCGLLSWILMLIPGIPCFAASQYIVSILISIQMSFLVSQVYCYVTEIFYPENLGKMIGFLCSVGGIISLVTDPMRKYSVDNGFYTMTVLCLIFALINEGLLLFMYVRKRKVPKVL</sequence>
<feature type="chain" id="PRO_0000454214" description="Aromatic and large neutral amino acid transporter 5-3">
    <location>
        <begin position="1"/>
        <end position="504"/>
    </location>
</feature>
<feature type="transmembrane region" description="Helical" evidence="1">
    <location>
        <begin position="76"/>
        <end position="96"/>
    </location>
</feature>
<feature type="transmembrane region" description="Helical" evidence="1">
    <location>
        <begin position="138"/>
        <end position="158"/>
    </location>
</feature>
<feature type="transmembrane region" description="Helical" evidence="1">
    <location>
        <begin position="165"/>
        <end position="185"/>
    </location>
</feature>
<feature type="transmembrane region" description="Helical" evidence="1">
    <location>
        <begin position="206"/>
        <end position="226"/>
    </location>
</feature>
<feature type="transmembrane region" description="Helical" evidence="1">
    <location>
        <begin position="233"/>
        <end position="253"/>
    </location>
</feature>
<feature type="transmembrane region" description="Helical" evidence="1">
    <location>
        <begin position="256"/>
        <end position="276"/>
    </location>
</feature>
<feature type="transmembrane region" description="Helical" evidence="1">
    <location>
        <begin position="324"/>
        <end position="344"/>
    </location>
</feature>
<feature type="transmembrane region" description="Helical" evidence="1">
    <location>
        <begin position="356"/>
        <end position="376"/>
    </location>
</feature>
<feature type="transmembrane region" description="Helical" evidence="1">
    <location>
        <begin position="381"/>
        <end position="401"/>
    </location>
</feature>
<feature type="transmembrane region" description="Helical" evidence="1">
    <location>
        <begin position="406"/>
        <end position="426"/>
    </location>
</feature>
<feature type="transmembrane region" description="Helical" evidence="1">
    <location>
        <begin position="436"/>
        <end position="456"/>
    </location>
</feature>
<feature type="transmembrane region" description="Helical" evidence="1">
    <location>
        <begin position="475"/>
        <end position="495"/>
    </location>
</feature>
<feature type="region of interest" description="Disordered" evidence="3">
    <location>
        <begin position="1"/>
        <end position="24"/>
    </location>
</feature>
<feature type="compositionally biased region" description="Basic and acidic residues" evidence="3">
    <location>
        <begin position="8"/>
        <end position="24"/>
    </location>
</feature>
<feature type="glycosylation site" description="N-linked (GlcNAc...) asparagine" evidence="2">
    <location>
        <position position="310"/>
    </location>
</feature>
<feature type="mutagenesis site" description="Tachyzoites have severe growth defect. Severe reduction in L-tyrosine and L-phenylalanine uptake. Does not cause toxoplasmosis in mice." evidence="4">
    <location>
        <begin position="188"/>
        <end position="504"/>
    </location>
</feature>
<protein>
    <recommendedName>
        <fullName evidence="5">Aromatic and large neutral amino acid transporter 5-3</fullName>
    </recommendedName>
    <alternativeName>
        <fullName evidence="5">Apicomplexan amino acid transporter 5-3</fullName>
        <shortName evidence="5">TgApiAT5-3</shortName>
    </alternativeName>
    <alternativeName>
        <fullName evidence="6">Major facilitator superfamily domain-containing protein</fullName>
    </alternativeName>
</protein>
<accession>A0A7J6K338</accession>
<reference evidence="7" key="1">
    <citation type="submission" date="2020-03" db="EMBL/GenBank/DDBJ databases">
        <title>Genome sequence of Toxoplasma gondii RH-88 strain.</title>
        <authorList>
            <person name="Lorenzi H.A."/>
            <person name="Venepally P."/>
            <person name="Rozenberg A."/>
            <person name="Sibley D."/>
        </authorList>
    </citation>
    <scope>NUCLEOTIDE SEQUENCE [LARGE SCALE GENOMIC DNA]</scope>
    <source>
        <strain evidence="7">RH-88</strain>
    </source>
</reference>
<reference evidence="6" key="2">
    <citation type="journal article" date="2019" name="PLoS Pathog.">
        <title>The tyrosine transporter of Toxoplasma gondii is a member of the newly defined apicomplexan amino acid transporter (ApiAT) family.</title>
        <authorList>
            <person name="Parker K.E.R."/>
            <person name="Fairweather S.J."/>
            <person name="Rajendran E."/>
            <person name="Blume M."/>
            <person name="McConville M.J."/>
            <person name="Broeer S."/>
            <person name="Kirk K."/>
            <person name="van Dooren G.G."/>
        </authorList>
    </citation>
    <scope>FUNCTION</scope>
    <scope>CATALYTIC ACTIVITY</scope>
    <scope>ACTIVITY REGULATION</scope>
    <scope>NOMENCLATURE</scope>
    <scope>SUBCELLULAR LOCATION</scope>
    <scope>MUTAGENESIS OF 188-PHE--LEU-504</scope>
</reference>
<organism evidence="7">
    <name type="scientific">Toxoplasma gondii</name>
    <dbReference type="NCBI Taxonomy" id="5811"/>
    <lineage>
        <taxon>Eukaryota</taxon>
        <taxon>Sar</taxon>
        <taxon>Alveolata</taxon>
        <taxon>Apicomplexa</taxon>
        <taxon>Conoidasida</taxon>
        <taxon>Coccidia</taxon>
        <taxon>Eucoccidiorida</taxon>
        <taxon>Eimeriorina</taxon>
        <taxon>Sarcocystidae</taxon>
        <taxon>Toxoplasma</taxon>
    </lineage>
</organism>
<evidence type="ECO:0000255" key="1"/>
<evidence type="ECO:0000255" key="2">
    <source>
        <dbReference type="PROSITE-ProRule" id="PRU00498"/>
    </source>
</evidence>
<evidence type="ECO:0000256" key="3">
    <source>
        <dbReference type="SAM" id="MobiDB-lite"/>
    </source>
</evidence>
<evidence type="ECO:0000269" key="4">
    <source>
    </source>
</evidence>
<evidence type="ECO:0000303" key="5">
    <source>
    </source>
</evidence>
<evidence type="ECO:0000305" key="6"/>
<evidence type="ECO:0000312" key="7">
    <source>
        <dbReference type="EMBL" id="KAF4641427.1"/>
    </source>
</evidence>
<gene>
    <name evidence="5" type="primary">ApiAT5-3</name>
    <name evidence="7" type="ORF">TGRH88_072370</name>
</gene>
<dbReference type="EMBL" id="JAAUHK010000194">
    <property type="protein sequence ID" value="KAF4641427.1"/>
    <property type="molecule type" value="Genomic_DNA"/>
</dbReference>
<dbReference type="SMR" id="A0A7J6K338"/>
<dbReference type="GlyCosmos" id="A0A7J6K338">
    <property type="glycosylation" value="1 site, No reported glycans"/>
</dbReference>
<dbReference type="VEuPathDB" id="ToxoDB:TGME49_257530"/>
<dbReference type="Proteomes" id="UP000557509">
    <property type="component" value="Unassembled WGS sequence"/>
</dbReference>
<dbReference type="GO" id="GO:0005886">
    <property type="term" value="C:plasma membrane"/>
    <property type="evidence" value="ECO:0000314"/>
    <property type="project" value="UniProtKB"/>
</dbReference>
<dbReference type="GO" id="GO:0005302">
    <property type="term" value="F:L-tyrosine transmembrane transporter activity"/>
    <property type="evidence" value="ECO:0000315"/>
    <property type="project" value="UniProtKB"/>
</dbReference>
<dbReference type="GO" id="GO:0080144">
    <property type="term" value="P:intracellular amino acid homeostasis"/>
    <property type="evidence" value="ECO:0000315"/>
    <property type="project" value="UniProtKB"/>
</dbReference>
<dbReference type="GO" id="GO:1903808">
    <property type="term" value="P:L-tyrosine import across plasma membrane"/>
    <property type="evidence" value="ECO:0000315"/>
    <property type="project" value="UniProtKB"/>
</dbReference>
<dbReference type="Gene3D" id="1.20.1250.20">
    <property type="entry name" value="MFS general substrate transporter like domains"/>
    <property type="match status" value="2"/>
</dbReference>
<dbReference type="InterPro" id="IPR011701">
    <property type="entry name" value="MFS"/>
</dbReference>
<dbReference type="InterPro" id="IPR036259">
    <property type="entry name" value="MFS_trans_sf"/>
</dbReference>
<dbReference type="InterPro" id="IPR052599">
    <property type="entry name" value="SLC43A_AATransporter"/>
</dbReference>
<dbReference type="PANTHER" id="PTHR20772">
    <property type="entry name" value="PROTEIN FMP42"/>
    <property type="match status" value="1"/>
</dbReference>
<dbReference type="PANTHER" id="PTHR20772:SF2">
    <property type="entry name" value="PROTEIN FMP42"/>
    <property type="match status" value="1"/>
</dbReference>
<dbReference type="Pfam" id="PF07690">
    <property type="entry name" value="MFS_1"/>
    <property type="match status" value="1"/>
</dbReference>
<dbReference type="SUPFAM" id="SSF103473">
    <property type="entry name" value="MFS general substrate transporter"/>
    <property type="match status" value="1"/>
</dbReference>
<comment type="function">
    <text evidence="4">L-tyrosine transporter that is essential for parasite survival and virulence (PubMed:30742695). May also act as an aromatic and large neutral amino acid transporter (PubMed:30742695). Does not cotransport other charged ions (PubMed:30742695). Involved in amino acid homeostasis by facilitating the net uptake of L-tyrosine and maintaining intracellular pools of aromatic and large neutral amino acids through exchange (PubMed:30742695).</text>
</comment>
<comment type="catalytic activity">
    <reaction evidence="4">
        <text>L-tyrosine(in) = L-tyrosine(out)</text>
        <dbReference type="Rhea" id="RHEA:68572"/>
        <dbReference type="ChEBI" id="CHEBI:58315"/>
    </reaction>
</comment>
<comment type="activity regulation">
    <text evidence="4">L-tyrosine uptake is stimulated in trans by aromatic and large neutral amino acids, but not smaller or charged amino acids.</text>
</comment>
<comment type="subcellular location">
    <subcellularLocation>
        <location evidence="4">Cell membrane</location>
        <topology evidence="1">Multi-pass membrane protein</topology>
    </subcellularLocation>
</comment>
<comment type="developmental stage">
    <text evidence="4">Expressed in the tachyzoite stage.</text>
</comment>
<comment type="similarity">
    <text evidence="6">Belongs to the SLC43A transporter (TC 2.A.1.44) family.</text>
</comment>